<organism>
    <name type="scientific">Aedes aegypti</name>
    <name type="common">Yellowfever mosquito</name>
    <name type="synonym">Culex aegypti</name>
    <dbReference type="NCBI Taxonomy" id="7159"/>
    <lineage>
        <taxon>Eukaryota</taxon>
        <taxon>Metazoa</taxon>
        <taxon>Ecdysozoa</taxon>
        <taxon>Arthropoda</taxon>
        <taxon>Hexapoda</taxon>
        <taxon>Insecta</taxon>
        <taxon>Pterygota</taxon>
        <taxon>Neoptera</taxon>
        <taxon>Endopterygota</taxon>
        <taxon>Diptera</taxon>
        <taxon>Nematocera</taxon>
        <taxon>Culicoidea</taxon>
        <taxon>Culicidae</taxon>
        <taxon>Culicinae</taxon>
        <taxon>Aedini</taxon>
        <taxon>Aedes</taxon>
        <taxon>Stegomyia</taxon>
    </lineage>
</organism>
<dbReference type="EMBL" id="CH477691">
    <property type="protein sequence ID" value="EAT37227.1"/>
    <property type="molecule type" value="Genomic_DNA"/>
</dbReference>
<dbReference type="SMR" id="Q0IEG8"/>
<dbReference type="FunCoup" id="Q0IEG8">
    <property type="interactions" value="1995"/>
</dbReference>
<dbReference type="STRING" id="7159.Q0IEG8"/>
<dbReference type="PaxDb" id="7159-AAEL010762-PA"/>
<dbReference type="EnsemblMetazoa" id="AAEL010762-RA">
    <property type="protein sequence ID" value="AAEL010762-PA"/>
    <property type="gene ID" value="AAEL010762"/>
</dbReference>
<dbReference type="EnsemblMetazoa" id="AAEL010762-RB">
    <property type="protein sequence ID" value="AAEL010762-PB"/>
    <property type="gene ID" value="AAEL010762"/>
</dbReference>
<dbReference type="GeneID" id="5573829"/>
<dbReference type="KEGG" id="aag:5573829"/>
<dbReference type="CTD" id="32769"/>
<dbReference type="VEuPathDB" id="VectorBase:AAEL010762"/>
<dbReference type="eggNOG" id="KOG0797">
    <property type="taxonomic scope" value="Eukaryota"/>
</dbReference>
<dbReference type="HOGENOM" id="CLU_006974_1_0_1"/>
<dbReference type="InParanoid" id="Q0IEG8"/>
<dbReference type="OMA" id="AYKCMWA"/>
<dbReference type="OrthoDB" id="5572108at2759"/>
<dbReference type="PhylomeDB" id="Q0IEG8"/>
<dbReference type="Proteomes" id="UP000008820">
    <property type="component" value="Chromosome 3"/>
</dbReference>
<dbReference type="Proteomes" id="UP000682892">
    <property type="component" value="Chromosome 3"/>
</dbReference>
<dbReference type="GO" id="GO:0005634">
    <property type="term" value="C:nucleus"/>
    <property type="evidence" value="ECO:0007669"/>
    <property type="project" value="UniProtKB-SubCell"/>
</dbReference>
<dbReference type="GO" id="GO:0005524">
    <property type="term" value="F:ATP binding"/>
    <property type="evidence" value="ECO:0007669"/>
    <property type="project" value="UniProtKB-KW"/>
</dbReference>
<dbReference type="GO" id="GO:0006338">
    <property type="term" value="P:chromatin remodeling"/>
    <property type="evidence" value="ECO:0000250"/>
    <property type="project" value="UniProtKB"/>
</dbReference>
<dbReference type="GO" id="GO:0006310">
    <property type="term" value="P:DNA recombination"/>
    <property type="evidence" value="ECO:0007669"/>
    <property type="project" value="UniProtKB-KW"/>
</dbReference>
<dbReference type="GO" id="GO:0006281">
    <property type="term" value="P:DNA repair"/>
    <property type="evidence" value="ECO:0007669"/>
    <property type="project" value="UniProtKB-KW"/>
</dbReference>
<dbReference type="GO" id="GO:0006355">
    <property type="term" value="P:regulation of DNA-templated transcription"/>
    <property type="evidence" value="ECO:0000250"/>
    <property type="project" value="UniProtKB"/>
</dbReference>
<dbReference type="CDD" id="cd10206">
    <property type="entry name" value="ASKHA_NBD_Arp8-like"/>
    <property type="match status" value="1"/>
</dbReference>
<dbReference type="FunFam" id="3.30.420.40:FF:000121">
    <property type="entry name" value="Actin-related protein 8"/>
    <property type="match status" value="1"/>
</dbReference>
<dbReference type="Gene3D" id="3.30.420.40">
    <property type="match status" value="2"/>
</dbReference>
<dbReference type="Gene3D" id="3.90.640.10">
    <property type="entry name" value="Actin, Chain A, domain 4"/>
    <property type="match status" value="1"/>
</dbReference>
<dbReference type="InterPro" id="IPR004000">
    <property type="entry name" value="Actin"/>
</dbReference>
<dbReference type="InterPro" id="IPR043129">
    <property type="entry name" value="ATPase_NBD"/>
</dbReference>
<dbReference type="PANTHER" id="PTHR11937">
    <property type="entry name" value="ACTIN"/>
    <property type="match status" value="1"/>
</dbReference>
<dbReference type="Pfam" id="PF00022">
    <property type="entry name" value="Actin"/>
    <property type="match status" value="1"/>
</dbReference>
<dbReference type="SMART" id="SM00268">
    <property type="entry name" value="ACTIN"/>
    <property type="match status" value="1"/>
</dbReference>
<dbReference type="SUPFAM" id="SSF53067">
    <property type="entry name" value="Actin-like ATPase domain"/>
    <property type="match status" value="2"/>
</dbReference>
<gene>
    <name evidence="2" type="primary">Arp8</name>
    <name type="ORF">AAEL010762</name>
</gene>
<accession>Q0IEG8</accession>
<keyword id="KW-0067">ATP-binding</keyword>
<keyword id="KW-0227">DNA damage</keyword>
<keyword id="KW-0233">DNA recombination</keyword>
<keyword id="KW-0234">DNA repair</keyword>
<keyword id="KW-0547">Nucleotide-binding</keyword>
<keyword id="KW-0539">Nucleus</keyword>
<keyword id="KW-1185">Reference proteome</keyword>
<keyword id="KW-0804">Transcription</keyword>
<keyword id="KW-0805">Transcription regulation</keyword>
<comment type="function">
    <text evidence="1">Plays an important role in the functional organization of mitotic chromosomes. Exhibits low basal ATPase activity, and unable to polymerize (By similarity).</text>
</comment>
<comment type="function">
    <text evidence="1">Proposed core component of the chromatin remodeling INO80 complex which is involved in transcriptional regulation, DNA replication and probably DNA repair. Strongly prefer nucleosomes and H3-H4 tetramers over H2A-H2B dimers, suggesting it may act as a nucleosome recognition module within the complex (By similarity).</text>
</comment>
<comment type="subunit">
    <text evidence="1">Component of the chromatin remodeling Ino80 complex. Exists as monomers and dimers, but the dimer is most probably the biologically relevant form required for stable interactions with histones that exploits the twofold symmetry of the nucleosome core (By similarity).</text>
</comment>
<comment type="subcellular location">
    <subcellularLocation>
        <location evidence="2">Nucleus</location>
    </subcellularLocation>
</comment>
<comment type="similarity">
    <text evidence="3">Belongs to the actin family. ARP8 subfamily.</text>
</comment>
<feature type="chain" id="PRO_0000307119" description="Actin-related protein 8">
    <location>
        <begin position="1"/>
        <end position="562"/>
    </location>
</feature>
<feature type="binding site" evidence="1">
    <location>
        <begin position="248"/>
        <end position="251"/>
    </location>
    <ligand>
        <name>ATP</name>
        <dbReference type="ChEBI" id="CHEBI:30616"/>
    </ligand>
</feature>
<evidence type="ECO:0000250" key="1"/>
<evidence type="ECO:0000250" key="2">
    <source>
        <dbReference type="UniProtKB" id="Q9VX09"/>
    </source>
</evidence>
<evidence type="ECO:0000305" key="3"/>
<evidence type="ECO:0000312" key="4">
    <source>
        <dbReference type="EMBL" id="EAT37227.1"/>
    </source>
</evidence>
<name>ARP8_AEDAE</name>
<sequence>MSNNKETPEHLQAQNIIVIHPGSLYLRMGRASDVNPCRLLHAIGRRRKPGGRAYRDRVLSVPIAKPKESLSEFEECRLQVSHTLQSCVQSDGRRRYATPPQQISAFNRRSGAETVQASRVDWKDDLPGDKVFGEEVLWLNPAGEFNVHYPIRRGELNLHKDVGGSMSGVMCDLQDIWEYVLRHRLRIDLKQLKQYKAVLVISDIYNRAHLKELTSLLLNKIGFGCCFLVQDHVSATFGAGLGYACVVDVGDQKTSISCVEDGISHPNTRVRLPYGGADITQTFHWMLQKCSFPYKECDQSRPQDAFLLKQLKEDICHVNLDVCGAQEKTFAVHQPQQEKRRFTLQIGDEAIVAPLGLFHTELLSVTGVNKSTPMTQKPSRAQPHPEDCFDAEYLRETGRRGKENLEQTANESGMANAENADEDMVVEGLEQDREGKVNEKDFILPGGQMIGIDQAVLQSIERCPNDELKRKMYGCILVVGGGMKFTGISNWLQNRVALKIPLMYRSEHNIVTSSKDIDAEITAWKGAAIMSCLESAAELWLTEAEWTRYGLRILREKAVFMW</sequence>
<proteinExistence type="inferred from homology"/>
<protein>
    <recommendedName>
        <fullName>Actin-related protein 8</fullName>
    </recommendedName>
</protein>
<reference evidence="4" key="1">
    <citation type="journal article" date="2007" name="Science">
        <title>Genome sequence of Aedes aegypti, a major arbovirus vector.</title>
        <authorList>
            <person name="Nene V."/>
            <person name="Wortman J.R."/>
            <person name="Lawson D."/>
            <person name="Haas B.J."/>
            <person name="Kodira C.D."/>
            <person name="Tu Z.J."/>
            <person name="Loftus B.J."/>
            <person name="Xi Z."/>
            <person name="Megy K."/>
            <person name="Grabherr M."/>
            <person name="Ren Q."/>
            <person name="Zdobnov E.M."/>
            <person name="Lobo N.F."/>
            <person name="Campbell K.S."/>
            <person name="Brown S.E."/>
            <person name="Bonaldo M.F."/>
            <person name="Zhu J."/>
            <person name="Sinkins S.P."/>
            <person name="Hogenkamp D.G."/>
            <person name="Amedeo P."/>
            <person name="Arensburger P."/>
            <person name="Atkinson P.W."/>
            <person name="Bidwell S.L."/>
            <person name="Biedler J."/>
            <person name="Birney E."/>
            <person name="Bruggner R.V."/>
            <person name="Costas J."/>
            <person name="Coy M.R."/>
            <person name="Crabtree J."/>
            <person name="Crawford M."/>
            <person name="DeBruyn B."/>
            <person name="DeCaprio D."/>
            <person name="Eiglmeier K."/>
            <person name="Eisenstadt E."/>
            <person name="El-Dorry H."/>
            <person name="Gelbart W.M."/>
            <person name="Gomes S.L."/>
            <person name="Hammond M."/>
            <person name="Hannick L.I."/>
            <person name="Hogan J.R."/>
            <person name="Holmes M.H."/>
            <person name="Jaffe D."/>
            <person name="Johnston S.J."/>
            <person name="Kennedy R.C."/>
            <person name="Koo H."/>
            <person name="Kravitz S."/>
            <person name="Kriventseva E.V."/>
            <person name="Kulp D."/>
            <person name="Labutti K."/>
            <person name="Lee E."/>
            <person name="Li S."/>
            <person name="Lovin D.D."/>
            <person name="Mao C."/>
            <person name="Mauceli E."/>
            <person name="Menck C.F."/>
            <person name="Miller J.R."/>
            <person name="Montgomery P."/>
            <person name="Mori A."/>
            <person name="Nascimento A.L."/>
            <person name="Naveira H.F."/>
            <person name="Nusbaum C."/>
            <person name="O'Leary S.B."/>
            <person name="Orvis J."/>
            <person name="Pertea M."/>
            <person name="Quesneville H."/>
            <person name="Reidenbach K.R."/>
            <person name="Rogers Y.-H.C."/>
            <person name="Roth C.W."/>
            <person name="Schneider J.R."/>
            <person name="Schatz M."/>
            <person name="Shumway M."/>
            <person name="Stanke M."/>
            <person name="Stinson E.O."/>
            <person name="Tubio J.M.C."/>
            <person name="Vanzee J.P."/>
            <person name="Verjovski-Almeida S."/>
            <person name="Werner D."/>
            <person name="White O.R."/>
            <person name="Wyder S."/>
            <person name="Zeng Q."/>
            <person name="Zhao Q."/>
            <person name="Zhao Y."/>
            <person name="Hill C.A."/>
            <person name="Raikhel A.S."/>
            <person name="Soares M.B."/>
            <person name="Knudson D.L."/>
            <person name="Lee N.H."/>
            <person name="Galagan J."/>
            <person name="Salzberg S.L."/>
            <person name="Paulsen I.T."/>
            <person name="Dimopoulos G."/>
            <person name="Collins F.H."/>
            <person name="Bruce B."/>
            <person name="Fraser-Liggett C.M."/>
            <person name="Severson D.W."/>
        </authorList>
    </citation>
    <scope>NUCLEOTIDE SEQUENCE [LARGE SCALE GENOMIC DNA]</scope>
    <source>
        <strain>LVPib12</strain>
    </source>
</reference>